<protein>
    <recommendedName>
        <fullName evidence="1">Indole-3-glycerol phosphate synthase</fullName>
        <shortName evidence="1">IGPS</shortName>
        <ecNumber evidence="1">4.1.1.48</ecNumber>
    </recommendedName>
</protein>
<evidence type="ECO:0000255" key="1">
    <source>
        <dbReference type="HAMAP-Rule" id="MF_00134"/>
    </source>
</evidence>
<proteinExistence type="inferred from homology"/>
<sequence>MSTILDRIKAYKLEEIAARKAERPLVAVEDAARAAPAPRGFARALSTAAATGYGLIAEIKKASPSKGLIREDFDVPALARAYETGGATCLSVLTDGPSFQGADDFLRQAREAVKLPCLRKDFLYDTYQVAEARALGADCILIIMASVTDSQALELEAAASHWGMDVLVEVHSRDELARAEHLKSRLIGINNRNLDTFEVSLDVTRDLARRVPEDRLIVSESGLYTPEDLADLARYGARCFLIGESLMRQADVEAATRAILADPLTAQGGV</sequence>
<gene>
    <name evidence="1" type="primary">trpC</name>
    <name type="ordered locus">Rsph17029_0710</name>
</gene>
<dbReference type="EC" id="4.1.1.48" evidence="1"/>
<dbReference type="EMBL" id="CP000577">
    <property type="protein sequence ID" value="ABN75823.1"/>
    <property type="molecule type" value="Genomic_DNA"/>
</dbReference>
<dbReference type="RefSeq" id="WP_011840556.1">
    <property type="nucleotide sequence ID" value="NC_009049.1"/>
</dbReference>
<dbReference type="SMR" id="A3PHK7"/>
<dbReference type="KEGG" id="rsh:Rsph17029_0710"/>
<dbReference type="HOGENOM" id="CLU_034247_2_0_5"/>
<dbReference type="UniPathway" id="UPA00035">
    <property type="reaction ID" value="UER00043"/>
</dbReference>
<dbReference type="GO" id="GO:0004425">
    <property type="term" value="F:indole-3-glycerol-phosphate synthase activity"/>
    <property type="evidence" value="ECO:0007669"/>
    <property type="project" value="UniProtKB-UniRule"/>
</dbReference>
<dbReference type="GO" id="GO:0004640">
    <property type="term" value="F:phosphoribosylanthranilate isomerase activity"/>
    <property type="evidence" value="ECO:0007669"/>
    <property type="project" value="TreeGrafter"/>
</dbReference>
<dbReference type="GO" id="GO:0000162">
    <property type="term" value="P:L-tryptophan biosynthetic process"/>
    <property type="evidence" value="ECO:0007669"/>
    <property type="project" value="UniProtKB-UniRule"/>
</dbReference>
<dbReference type="CDD" id="cd00331">
    <property type="entry name" value="IGPS"/>
    <property type="match status" value="1"/>
</dbReference>
<dbReference type="FunFam" id="3.20.20.70:FF:000024">
    <property type="entry name" value="Indole-3-glycerol phosphate synthase"/>
    <property type="match status" value="1"/>
</dbReference>
<dbReference type="Gene3D" id="3.20.20.70">
    <property type="entry name" value="Aldolase class I"/>
    <property type="match status" value="1"/>
</dbReference>
<dbReference type="HAMAP" id="MF_00134_B">
    <property type="entry name" value="IGPS_B"/>
    <property type="match status" value="1"/>
</dbReference>
<dbReference type="InterPro" id="IPR013785">
    <property type="entry name" value="Aldolase_TIM"/>
</dbReference>
<dbReference type="InterPro" id="IPR045186">
    <property type="entry name" value="Indole-3-glycerol_P_synth"/>
</dbReference>
<dbReference type="InterPro" id="IPR013798">
    <property type="entry name" value="Indole-3-glycerol_P_synth_dom"/>
</dbReference>
<dbReference type="InterPro" id="IPR001468">
    <property type="entry name" value="Indole-3-GlycerolPSynthase_CS"/>
</dbReference>
<dbReference type="InterPro" id="IPR011060">
    <property type="entry name" value="RibuloseP-bd_barrel"/>
</dbReference>
<dbReference type="NCBIfam" id="NF001370">
    <property type="entry name" value="PRK00278.1-2"/>
    <property type="match status" value="1"/>
</dbReference>
<dbReference type="NCBIfam" id="NF001373">
    <property type="entry name" value="PRK00278.1-6"/>
    <property type="match status" value="1"/>
</dbReference>
<dbReference type="NCBIfam" id="NF001377">
    <property type="entry name" value="PRK00278.2-4"/>
    <property type="match status" value="1"/>
</dbReference>
<dbReference type="PANTHER" id="PTHR22854:SF2">
    <property type="entry name" value="INDOLE-3-GLYCEROL-PHOSPHATE SYNTHASE"/>
    <property type="match status" value="1"/>
</dbReference>
<dbReference type="PANTHER" id="PTHR22854">
    <property type="entry name" value="TRYPTOPHAN BIOSYNTHESIS PROTEIN"/>
    <property type="match status" value="1"/>
</dbReference>
<dbReference type="Pfam" id="PF00218">
    <property type="entry name" value="IGPS"/>
    <property type="match status" value="1"/>
</dbReference>
<dbReference type="SUPFAM" id="SSF51366">
    <property type="entry name" value="Ribulose-phoshate binding barrel"/>
    <property type="match status" value="1"/>
</dbReference>
<dbReference type="PROSITE" id="PS00614">
    <property type="entry name" value="IGPS"/>
    <property type="match status" value="1"/>
</dbReference>
<name>TRPC_CERS1</name>
<accession>A3PHK7</accession>
<feature type="chain" id="PRO_1000018548" description="Indole-3-glycerol phosphate synthase">
    <location>
        <begin position="1"/>
        <end position="270"/>
    </location>
</feature>
<reference key="1">
    <citation type="submission" date="2007-02" db="EMBL/GenBank/DDBJ databases">
        <title>Complete sequence of chromosome 1 of Rhodobacter sphaeroides ATCC 17029.</title>
        <authorList>
            <person name="Copeland A."/>
            <person name="Lucas S."/>
            <person name="Lapidus A."/>
            <person name="Barry K."/>
            <person name="Detter J.C."/>
            <person name="Glavina del Rio T."/>
            <person name="Hammon N."/>
            <person name="Israni S."/>
            <person name="Dalin E."/>
            <person name="Tice H."/>
            <person name="Pitluck S."/>
            <person name="Kiss H."/>
            <person name="Brettin T."/>
            <person name="Bruce D."/>
            <person name="Han C."/>
            <person name="Tapia R."/>
            <person name="Gilna P."/>
            <person name="Schmutz J."/>
            <person name="Larimer F."/>
            <person name="Land M."/>
            <person name="Hauser L."/>
            <person name="Kyrpides N."/>
            <person name="Mikhailova N."/>
            <person name="Richardson P."/>
            <person name="Mackenzie C."/>
            <person name="Choudhary M."/>
            <person name="Donohue T.J."/>
            <person name="Kaplan S."/>
        </authorList>
    </citation>
    <scope>NUCLEOTIDE SEQUENCE [LARGE SCALE GENOMIC DNA]</scope>
    <source>
        <strain>ATCC 17029 / ATH 2.4.9</strain>
    </source>
</reference>
<organism>
    <name type="scientific">Cereibacter sphaeroides (strain ATCC 17029 / ATH 2.4.9)</name>
    <name type="common">Rhodobacter sphaeroides</name>
    <dbReference type="NCBI Taxonomy" id="349101"/>
    <lineage>
        <taxon>Bacteria</taxon>
        <taxon>Pseudomonadati</taxon>
        <taxon>Pseudomonadota</taxon>
        <taxon>Alphaproteobacteria</taxon>
        <taxon>Rhodobacterales</taxon>
        <taxon>Paracoccaceae</taxon>
        <taxon>Cereibacter</taxon>
    </lineage>
</organism>
<comment type="catalytic activity">
    <reaction evidence="1">
        <text>1-(2-carboxyphenylamino)-1-deoxy-D-ribulose 5-phosphate + H(+) = (1S,2R)-1-C-(indol-3-yl)glycerol 3-phosphate + CO2 + H2O</text>
        <dbReference type="Rhea" id="RHEA:23476"/>
        <dbReference type="ChEBI" id="CHEBI:15377"/>
        <dbReference type="ChEBI" id="CHEBI:15378"/>
        <dbReference type="ChEBI" id="CHEBI:16526"/>
        <dbReference type="ChEBI" id="CHEBI:58613"/>
        <dbReference type="ChEBI" id="CHEBI:58866"/>
        <dbReference type="EC" id="4.1.1.48"/>
    </reaction>
</comment>
<comment type="pathway">
    <text evidence="1">Amino-acid biosynthesis; L-tryptophan biosynthesis; L-tryptophan from chorismate: step 4/5.</text>
</comment>
<comment type="similarity">
    <text evidence="1">Belongs to the TrpC family.</text>
</comment>
<keyword id="KW-0028">Amino-acid biosynthesis</keyword>
<keyword id="KW-0057">Aromatic amino acid biosynthesis</keyword>
<keyword id="KW-0210">Decarboxylase</keyword>
<keyword id="KW-0456">Lyase</keyword>
<keyword id="KW-0822">Tryptophan biosynthesis</keyword>